<accession>Q0TGX2</accession>
<feature type="chain" id="PRO_1000001400" description="Holliday junction branch migration complex subunit RuvB">
    <location>
        <begin position="1"/>
        <end position="336"/>
    </location>
</feature>
<feature type="region of interest" description="Large ATPase domain (RuvB-L)" evidence="1">
    <location>
        <begin position="4"/>
        <end position="184"/>
    </location>
</feature>
<feature type="region of interest" description="Small ATPAse domain (RuvB-S)" evidence="1">
    <location>
        <begin position="185"/>
        <end position="255"/>
    </location>
</feature>
<feature type="region of interest" description="Head domain (RuvB-H)" evidence="1">
    <location>
        <begin position="258"/>
        <end position="336"/>
    </location>
</feature>
<feature type="binding site" evidence="1">
    <location>
        <position position="23"/>
    </location>
    <ligand>
        <name>ATP</name>
        <dbReference type="ChEBI" id="CHEBI:30616"/>
    </ligand>
</feature>
<feature type="binding site" evidence="1">
    <location>
        <position position="24"/>
    </location>
    <ligand>
        <name>ATP</name>
        <dbReference type="ChEBI" id="CHEBI:30616"/>
    </ligand>
</feature>
<feature type="binding site" evidence="1">
    <location>
        <position position="65"/>
    </location>
    <ligand>
        <name>ATP</name>
        <dbReference type="ChEBI" id="CHEBI:30616"/>
    </ligand>
</feature>
<feature type="binding site" evidence="1">
    <location>
        <position position="68"/>
    </location>
    <ligand>
        <name>ATP</name>
        <dbReference type="ChEBI" id="CHEBI:30616"/>
    </ligand>
</feature>
<feature type="binding site" evidence="1">
    <location>
        <position position="69"/>
    </location>
    <ligand>
        <name>ATP</name>
        <dbReference type="ChEBI" id="CHEBI:30616"/>
    </ligand>
</feature>
<feature type="binding site" evidence="1">
    <location>
        <position position="69"/>
    </location>
    <ligand>
        <name>Mg(2+)</name>
        <dbReference type="ChEBI" id="CHEBI:18420"/>
    </ligand>
</feature>
<feature type="binding site" evidence="1">
    <location>
        <position position="70"/>
    </location>
    <ligand>
        <name>ATP</name>
        <dbReference type="ChEBI" id="CHEBI:30616"/>
    </ligand>
</feature>
<feature type="binding site" evidence="1">
    <location>
        <begin position="131"/>
        <end position="133"/>
    </location>
    <ligand>
        <name>ATP</name>
        <dbReference type="ChEBI" id="CHEBI:30616"/>
    </ligand>
</feature>
<feature type="binding site" evidence="1">
    <location>
        <position position="174"/>
    </location>
    <ligand>
        <name>ATP</name>
        <dbReference type="ChEBI" id="CHEBI:30616"/>
    </ligand>
</feature>
<feature type="binding site" evidence="1">
    <location>
        <position position="184"/>
    </location>
    <ligand>
        <name>ATP</name>
        <dbReference type="ChEBI" id="CHEBI:30616"/>
    </ligand>
</feature>
<feature type="binding site" evidence="1">
    <location>
        <position position="221"/>
    </location>
    <ligand>
        <name>ATP</name>
        <dbReference type="ChEBI" id="CHEBI:30616"/>
    </ligand>
</feature>
<feature type="binding site" evidence="1">
    <location>
        <position position="294"/>
    </location>
    <ligand>
        <name>DNA</name>
        <dbReference type="ChEBI" id="CHEBI:16991"/>
    </ligand>
</feature>
<feature type="binding site" evidence="1">
    <location>
        <position position="313"/>
    </location>
    <ligand>
        <name>DNA</name>
        <dbReference type="ChEBI" id="CHEBI:16991"/>
    </ligand>
</feature>
<feature type="binding site" evidence="1">
    <location>
        <position position="318"/>
    </location>
    <ligand>
        <name>DNA</name>
        <dbReference type="ChEBI" id="CHEBI:16991"/>
    </ligand>
</feature>
<dbReference type="EC" id="3.6.4.-" evidence="1"/>
<dbReference type="EMBL" id="CP000247">
    <property type="protein sequence ID" value="ABG69807.1"/>
    <property type="molecule type" value="Genomic_DNA"/>
</dbReference>
<dbReference type="RefSeq" id="WP_000568522.1">
    <property type="nucleotide sequence ID" value="NC_008253.1"/>
</dbReference>
<dbReference type="SMR" id="Q0TGX2"/>
<dbReference type="GeneID" id="86860002"/>
<dbReference type="KEGG" id="ecp:ECP_1804"/>
<dbReference type="HOGENOM" id="CLU_055599_1_0_6"/>
<dbReference type="Proteomes" id="UP000009182">
    <property type="component" value="Chromosome"/>
</dbReference>
<dbReference type="GO" id="GO:0005737">
    <property type="term" value="C:cytoplasm"/>
    <property type="evidence" value="ECO:0007669"/>
    <property type="project" value="UniProtKB-SubCell"/>
</dbReference>
<dbReference type="GO" id="GO:0048476">
    <property type="term" value="C:Holliday junction resolvase complex"/>
    <property type="evidence" value="ECO:0007669"/>
    <property type="project" value="UniProtKB-UniRule"/>
</dbReference>
<dbReference type="GO" id="GO:0005524">
    <property type="term" value="F:ATP binding"/>
    <property type="evidence" value="ECO:0007669"/>
    <property type="project" value="UniProtKB-UniRule"/>
</dbReference>
<dbReference type="GO" id="GO:0016887">
    <property type="term" value="F:ATP hydrolysis activity"/>
    <property type="evidence" value="ECO:0007669"/>
    <property type="project" value="InterPro"/>
</dbReference>
<dbReference type="GO" id="GO:0000400">
    <property type="term" value="F:four-way junction DNA binding"/>
    <property type="evidence" value="ECO:0007669"/>
    <property type="project" value="UniProtKB-UniRule"/>
</dbReference>
<dbReference type="GO" id="GO:0009378">
    <property type="term" value="F:four-way junction helicase activity"/>
    <property type="evidence" value="ECO:0007669"/>
    <property type="project" value="InterPro"/>
</dbReference>
<dbReference type="GO" id="GO:0006310">
    <property type="term" value="P:DNA recombination"/>
    <property type="evidence" value="ECO:0007669"/>
    <property type="project" value="UniProtKB-UniRule"/>
</dbReference>
<dbReference type="GO" id="GO:0006281">
    <property type="term" value="P:DNA repair"/>
    <property type="evidence" value="ECO:0007669"/>
    <property type="project" value="UniProtKB-UniRule"/>
</dbReference>
<dbReference type="GO" id="GO:0009432">
    <property type="term" value="P:SOS response"/>
    <property type="evidence" value="ECO:0007669"/>
    <property type="project" value="UniProtKB-UniRule"/>
</dbReference>
<dbReference type="CDD" id="cd00009">
    <property type="entry name" value="AAA"/>
    <property type="match status" value="1"/>
</dbReference>
<dbReference type="FunFam" id="1.10.10.10:FF:000086">
    <property type="entry name" value="Holliday junction ATP-dependent DNA helicase RuvB"/>
    <property type="match status" value="1"/>
</dbReference>
<dbReference type="FunFam" id="1.10.8.60:FF:000023">
    <property type="entry name" value="Holliday junction ATP-dependent DNA helicase RuvB"/>
    <property type="match status" value="1"/>
</dbReference>
<dbReference type="FunFam" id="3.40.50.300:FF:000073">
    <property type="entry name" value="Holliday junction ATP-dependent DNA helicase RuvB"/>
    <property type="match status" value="1"/>
</dbReference>
<dbReference type="Gene3D" id="1.10.8.60">
    <property type="match status" value="1"/>
</dbReference>
<dbReference type="Gene3D" id="3.40.50.300">
    <property type="entry name" value="P-loop containing nucleotide triphosphate hydrolases"/>
    <property type="match status" value="1"/>
</dbReference>
<dbReference type="Gene3D" id="1.10.10.10">
    <property type="entry name" value="Winged helix-like DNA-binding domain superfamily/Winged helix DNA-binding domain"/>
    <property type="match status" value="1"/>
</dbReference>
<dbReference type="HAMAP" id="MF_00016">
    <property type="entry name" value="DNA_HJ_migration_RuvB"/>
    <property type="match status" value="1"/>
</dbReference>
<dbReference type="InterPro" id="IPR003593">
    <property type="entry name" value="AAA+_ATPase"/>
</dbReference>
<dbReference type="InterPro" id="IPR041445">
    <property type="entry name" value="AAA_lid_4"/>
</dbReference>
<dbReference type="InterPro" id="IPR004605">
    <property type="entry name" value="DNA_helicase_Holl-junc_RuvB"/>
</dbReference>
<dbReference type="InterPro" id="IPR027417">
    <property type="entry name" value="P-loop_NTPase"/>
</dbReference>
<dbReference type="InterPro" id="IPR008824">
    <property type="entry name" value="RuvB-like_N"/>
</dbReference>
<dbReference type="InterPro" id="IPR008823">
    <property type="entry name" value="RuvB_C"/>
</dbReference>
<dbReference type="InterPro" id="IPR036388">
    <property type="entry name" value="WH-like_DNA-bd_sf"/>
</dbReference>
<dbReference type="InterPro" id="IPR036390">
    <property type="entry name" value="WH_DNA-bd_sf"/>
</dbReference>
<dbReference type="NCBIfam" id="NF000868">
    <property type="entry name" value="PRK00080.1"/>
    <property type="match status" value="1"/>
</dbReference>
<dbReference type="NCBIfam" id="TIGR00635">
    <property type="entry name" value="ruvB"/>
    <property type="match status" value="1"/>
</dbReference>
<dbReference type="PANTHER" id="PTHR42848">
    <property type="match status" value="1"/>
</dbReference>
<dbReference type="PANTHER" id="PTHR42848:SF1">
    <property type="entry name" value="HOLLIDAY JUNCTION BRANCH MIGRATION COMPLEX SUBUNIT RUVB"/>
    <property type="match status" value="1"/>
</dbReference>
<dbReference type="Pfam" id="PF17864">
    <property type="entry name" value="AAA_lid_4"/>
    <property type="match status" value="1"/>
</dbReference>
<dbReference type="Pfam" id="PF05491">
    <property type="entry name" value="RuvB_C"/>
    <property type="match status" value="1"/>
</dbReference>
<dbReference type="Pfam" id="PF05496">
    <property type="entry name" value="RuvB_N"/>
    <property type="match status" value="1"/>
</dbReference>
<dbReference type="SMART" id="SM00382">
    <property type="entry name" value="AAA"/>
    <property type="match status" value="1"/>
</dbReference>
<dbReference type="SUPFAM" id="SSF52540">
    <property type="entry name" value="P-loop containing nucleoside triphosphate hydrolases"/>
    <property type="match status" value="1"/>
</dbReference>
<dbReference type="SUPFAM" id="SSF46785">
    <property type="entry name" value="Winged helix' DNA-binding domain"/>
    <property type="match status" value="1"/>
</dbReference>
<evidence type="ECO:0000255" key="1">
    <source>
        <dbReference type="HAMAP-Rule" id="MF_00016"/>
    </source>
</evidence>
<name>RUVB_ECOL5</name>
<sequence>MIEADRLISAGTTLPEDVADRAIRPKLLEEYVGQPQVRSQMEIFIKAAKLRGDALDHLLIFGPPGLGKTTLANIVANEMGVNLRTTSGPVLEKAGDLAAMLTNLEPHDVLFIDEIHRLSPVVEEVLYPAMEDYQLDIMIGEGPAARSIKIDLPPFTLIGATTRAGSLTSPLRDRFGIVQRLEFYQVPDLQYIVSRSARFMGLEMSDDGALEVARRARGTPRIANRLLRRVRDFAEVKHDGTISADIAAQALDMLNVDAEGFDYMDRKLLLAVIDKFFGGPVGLDNLAAAIGEERETIEDVLEPYLIQQGFLQRTPRGRMATVRAWNHFGITPPEMP</sequence>
<gene>
    <name evidence="1" type="primary">ruvB</name>
    <name type="ordered locus">ECP_1804</name>
</gene>
<reference key="1">
    <citation type="journal article" date="2006" name="Mol. Microbiol.">
        <title>Role of pathogenicity island-associated integrases in the genome plasticity of uropathogenic Escherichia coli strain 536.</title>
        <authorList>
            <person name="Hochhut B."/>
            <person name="Wilde C."/>
            <person name="Balling G."/>
            <person name="Middendorf B."/>
            <person name="Dobrindt U."/>
            <person name="Brzuszkiewicz E."/>
            <person name="Gottschalk G."/>
            <person name="Carniel E."/>
            <person name="Hacker J."/>
        </authorList>
    </citation>
    <scope>NUCLEOTIDE SEQUENCE [LARGE SCALE GENOMIC DNA]</scope>
    <source>
        <strain>536 / UPEC</strain>
    </source>
</reference>
<proteinExistence type="inferred from homology"/>
<organism>
    <name type="scientific">Escherichia coli O6:K15:H31 (strain 536 / UPEC)</name>
    <dbReference type="NCBI Taxonomy" id="362663"/>
    <lineage>
        <taxon>Bacteria</taxon>
        <taxon>Pseudomonadati</taxon>
        <taxon>Pseudomonadota</taxon>
        <taxon>Gammaproteobacteria</taxon>
        <taxon>Enterobacterales</taxon>
        <taxon>Enterobacteriaceae</taxon>
        <taxon>Escherichia</taxon>
    </lineage>
</organism>
<protein>
    <recommendedName>
        <fullName evidence="1">Holliday junction branch migration complex subunit RuvB</fullName>
        <ecNumber evidence="1">3.6.4.-</ecNumber>
    </recommendedName>
</protein>
<comment type="function">
    <text evidence="1">The RuvA-RuvB-RuvC complex processes Holliday junction (HJ) DNA during genetic recombination and DNA repair, while the RuvA-RuvB complex plays an important role in the rescue of blocked DNA replication forks via replication fork reversal (RFR). RuvA specifically binds to HJ cruciform DNA, conferring on it an open structure. The RuvB hexamer acts as an ATP-dependent pump, pulling dsDNA into and through the RuvAB complex. RuvB forms 2 homohexamers on either side of HJ DNA bound by 1 or 2 RuvA tetramers; 4 subunits per hexamer contact DNA at a time. Coordinated motions by a converter formed by DNA-disengaged RuvB subunits stimulates ATP hydrolysis and nucleotide exchange. Immobilization of the converter enables RuvB to convert the ATP-contained energy into a lever motion, pulling 2 nucleotides of DNA out of the RuvA tetramer per ATP hydrolyzed, thus driving DNA branch migration. The RuvB motors rotate together with the DNA substrate, which together with the progressing nucleotide cycle form the mechanistic basis for DNA recombination by continuous HJ branch migration. Branch migration allows RuvC to scan DNA until it finds its consensus sequence, where it cleaves and resolves cruciform DNA.</text>
</comment>
<comment type="catalytic activity">
    <reaction evidence="1">
        <text>ATP + H2O = ADP + phosphate + H(+)</text>
        <dbReference type="Rhea" id="RHEA:13065"/>
        <dbReference type="ChEBI" id="CHEBI:15377"/>
        <dbReference type="ChEBI" id="CHEBI:15378"/>
        <dbReference type="ChEBI" id="CHEBI:30616"/>
        <dbReference type="ChEBI" id="CHEBI:43474"/>
        <dbReference type="ChEBI" id="CHEBI:456216"/>
    </reaction>
</comment>
<comment type="subunit">
    <text evidence="1">Homohexamer. Forms an RuvA(8)-RuvB(12)-Holliday junction (HJ) complex. HJ DNA is sandwiched between 2 RuvA tetramers; dsDNA enters through RuvA and exits via RuvB. An RuvB hexamer assembles on each DNA strand where it exits the tetramer. Each RuvB hexamer is contacted by two RuvA subunits (via domain III) on 2 adjacent RuvB subunits; this complex drives branch migration. In the full resolvosome a probable DNA-RuvA(4)-RuvB(12)-RuvC(2) complex forms which resolves the HJ.</text>
</comment>
<comment type="subcellular location">
    <subcellularLocation>
        <location evidence="1">Cytoplasm</location>
    </subcellularLocation>
</comment>
<comment type="domain">
    <text evidence="1">Has 3 domains, the large (RuvB-L) and small ATPase (RuvB-S) domains and the C-terminal head (RuvB-H) domain. The head domain binds DNA, while the ATPase domains jointly bind ATP, ADP or are empty depending on the state of the subunit in the translocation cycle. During a single DNA translocation step the structure of each domain remains the same, but their relative positions change.</text>
</comment>
<comment type="similarity">
    <text evidence="1">Belongs to the RuvB family.</text>
</comment>
<keyword id="KW-0067">ATP-binding</keyword>
<keyword id="KW-0963">Cytoplasm</keyword>
<keyword id="KW-0227">DNA damage</keyword>
<keyword id="KW-0233">DNA recombination</keyword>
<keyword id="KW-0234">DNA repair</keyword>
<keyword id="KW-0238">DNA-binding</keyword>
<keyword id="KW-0378">Hydrolase</keyword>
<keyword id="KW-0547">Nucleotide-binding</keyword>
<keyword id="KW-0742">SOS response</keyword>